<keyword id="KW-0256">Endoplasmic reticulum</keyword>
<keyword id="KW-0472">Membrane</keyword>
<keyword id="KW-1185">Reference proteome</keyword>
<keyword id="KW-0762">Sugar transport</keyword>
<keyword id="KW-0812">Transmembrane</keyword>
<keyword id="KW-1133">Transmembrane helix</keyword>
<keyword id="KW-0813">Transport</keyword>
<organism evidence="5">
    <name type="scientific">Drosophila melanogaster</name>
    <name type="common">Fruit fly</name>
    <dbReference type="NCBI Taxonomy" id="7227"/>
    <lineage>
        <taxon>Eukaryota</taxon>
        <taxon>Metazoa</taxon>
        <taxon>Ecdysozoa</taxon>
        <taxon>Arthropoda</taxon>
        <taxon>Hexapoda</taxon>
        <taxon>Insecta</taxon>
        <taxon>Pterygota</taxon>
        <taxon>Neoptera</taxon>
        <taxon>Endopterygota</taxon>
        <taxon>Diptera</taxon>
        <taxon>Brachycera</taxon>
        <taxon>Muscomorpha</taxon>
        <taxon>Ephydroidea</taxon>
        <taxon>Drosophilidae</taxon>
        <taxon>Drosophila</taxon>
        <taxon>Sophophora</taxon>
    </lineage>
</organism>
<accession>Q9W429</accession>
<accession>Q5BIK7</accession>
<feature type="chain" id="PRO_0000213390" description="Endoplasmic reticulum GDP-fucose transporter">
    <location>
        <begin position="1"/>
        <end position="352"/>
    </location>
</feature>
<feature type="transmembrane region" description="Helical" evidence="1">
    <location>
        <begin position="9"/>
        <end position="29"/>
    </location>
</feature>
<feature type="transmembrane region" description="Helical" evidence="1">
    <location>
        <begin position="34"/>
        <end position="54"/>
    </location>
</feature>
<feature type="transmembrane region" description="Helical" evidence="1">
    <location>
        <begin position="70"/>
        <end position="90"/>
    </location>
</feature>
<feature type="transmembrane region" description="Helical" evidence="1">
    <location>
        <begin position="96"/>
        <end position="116"/>
    </location>
</feature>
<feature type="transmembrane region" description="Helical" evidence="1">
    <location>
        <begin position="126"/>
        <end position="146"/>
    </location>
</feature>
<feature type="transmembrane region" description="Helical" evidence="1">
    <location>
        <begin position="163"/>
        <end position="183"/>
    </location>
</feature>
<feature type="transmembrane region" description="Helical" evidence="1">
    <location>
        <begin position="201"/>
        <end position="221"/>
    </location>
</feature>
<feature type="transmembrane region" description="Helical" evidence="1">
    <location>
        <begin position="249"/>
        <end position="271"/>
    </location>
</feature>
<feature type="transmembrane region" description="Helical" evidence="1">
    <location>
        <begin position="276"/>
        <end position="298"/>
    </location>
</feature>
<feature type="transmembrane region" description="Helical" evidence="1">
    <location>
        <begin position="305"/>
        <end position="325"/>
    </location>
</feature>
<feature type="short sequence motif" description="Prevents secretion from ER">
    <location>
        <begin position="350"/>
        <end position="352"/>
    </location>
</feature>
<feature type="sequence conflict" description="In Ref. 3; AAX33365." evidence="3" ref="3">
    <original>L</original>
    <variation>Q</variation>
    <location>
        <position position="178"/>
    </location>
</feature>
<protein>
    <recommendedName>
        <fullName evidence="4">Endoplasmic reticulum GDP-fucose transporter</fullName>
    </recommendedName>
    <alternativeName>
        <fullName>Solute carrier family 35 member B4 homolog</fullName>
    </alternativeName>
    <alternativeName>
        <fullName>UDP-xylose and UDP-N-acetylglucosamine transporter</fullName>
    </alternativeName>
</protein>
<reference key="1">
    <citation type="journal article" date="2000" name="Science">
        <title>The genome sequence of Drosophila melanogaster.</title>
        <authorList>
            <person name="Adams M.D."/>
            <person name="Celniker S.E."/>
            <person name="Holt R.A."/>
            <person name="Evans C.A."/>
            <person name="Gocayne J.D."/>
            <person name="Amanatides P.G."/>
            <person name="Scherer S.E."/>
            <person name="Li P.W."/>
            <person name="Hoskins R.A."/>
            <person name="Galle R.F."/>
            <person name="George R.A."/>
            <person name="Lewis S.E."/>
            <person name="Richards S."/>
            <person name="Ashburner M."/>
            <person name="Henderson S.N."/>
            <person name="Sutton G.G."/>
            <person name="Wortman J.R."/>
            <person name="Yandell M.D."/>
            <person name="Zhang Q."/>
            <person name="Chen L.X."/>
            <person name="Brandon R.C."/>
            <person name="Rogers Y.-H.C."/>
            <person name="Blazej R.G."/>
            <person name="Champe M."/>
            <person name="Pfeiffer B.D."/>
            <person name="Wan K.H."/>
            <person name="Doyle C."/>
            <person name="Baxter E.G."/>
            <person name="Helt G."/>
            <person name="Nelson C.R."/>
            <person name="Miklos G.L.G."/>
            <person name="Abril J.F."/>
            <person name="Agbayani A."/>
            <person name="An H.-J."/>
            <person name="Andrews-Pfannkoch C."/>
            <person name="Baldwin D."/>
            <person name="Ballew R.M."/>
            <person name="Basu A."/>
            <person name="Baxendale J."/>
            <person name="Bayraktaroglu L."/>
            <person name="Beasley E.M."/>
            <person name="Beeson K.Y."/>
            <person name="Benos P.V."/>
            <person name="Berman B.P."/>
            <person name="Bhandari D."/>
            <person name="Bolshakov S."/>
            <person name="Borkova D."/>
            <person name="Botchan M.R."/>
            <person name="Bouck J."/>
            <person name="Brokstein P."/>
            <person name="Brottier P."/>
            <person name="Burtis K.C."/>
            <person name="Busam D.A."/>
            <person name="Butler H."/>
            <person name="Cadieu E."/>
            <person name="Center A."/>
            <person name="Chandra I."/>
            <person name="Cherry J.M."/>
            <person name="Cawley S."/>
            <person name="Dahlke C."/>
            <person name="Davenport L.B."/>
            <person name="Davies P."/>
            <person name="de Pablos B."/>
            <person name="Delcher A."/>
            <person name="Deng Z."/>
            <person name="Mays A.D."/>
            <person name="Dew I."/>
            <person name="Dietz S.M."/>
            <person name="Dodson K."/>
            <person name="Doup L.E."/>
            <person name="Downes M."/>
            <person name="Dugan-Rocha S."/>
            <person name="Dunkov B.C."/>
            <person name="Dunn P."/>
            <person name="Durbin K.J."/>
            <person name="Evangelista C.C."/>
            <person name="Ferraz C."/>
            <person name="Ferriera S."/>
            <person name="Fleischmann W."/>
            <person name="Fosler C."/>
            <person name="Gabrielian A.E."/>
            <person name="Garg N.S."/>
            <person name="Gelbart W.M."/>
            <person name="Glasser K."/>
            <person name="Glodek A."/>
            <person name="Gong F."/>
            <person name="Gorrell J.H."/>
            <person name="Gu Z."/>
            <person name="Guan P."/>
            <person name="Harris M."/>
            <person name="Harris N.L."/>
            <person name="Harvey D.A."/>
            <person name="Heiman T.J."/>
            <person name="Hernandez J.R."/>
            <person name="Houck J."/>
            <person name="Hostin D."/>
            <person name="Houston K.A."/>
            <person name="Howland T.J."/>
            <person name="Wei M.-H."/>
            <person name="Ibegwam C."/>
            <person name="Jalali M."/>
            <person name="Kalush F."/>
            <person name="Karpen G.H."/>
            <person name="Ke Z."/>
            <person name="Kennison J.A."/>
            <person name="Ketchum K.A."/>
            <person name="Kimmel B.E."/>
            <person name="Kodira C.D."/>
            <person name="Kraft C.L."/>
            <person name="Kravitz S."/>
            <person name="Kulp D."/>
            <person name="Lai Z."/>
            <person name="Lasko P."/>
            <person name="Lei Y."/>
            <person name="Levitsky A.A."/>
            <person name="Li J.H."/>
            <person name="Li Z."/>
            <person name="Liang Y."/>
            <person name="Lin X."/>
            <person name="Liu X."/>
            <person name="Mattei B."/>
            <person name="McIntosh T.C."/>
            <person name="McLeod M.P."/>
            <person name="McPherson D."/>
            <person name="Merkulov G."/>
            <person name="Milshina N.V."/>
            <person name="Mobarry C."/>
            <person name="Morris J."/>
            <person name="Moshrefi A."/>
            <person name="Mount S.M."/>
            <person name="Moy M."/>
            <person name="Murphy B."/>
            <person name="Murphy L."/>
            <person name="Muzny D.M."/>
            <person name="Nelson D.L."/>
            <person name="Nelson D.R."/>
            <person name="Nelson K.A."/>
            <person name="Nixon K."/>
            <person name="Nusskern D.R."/>
            <person name="Pacleb J.M."/>
            <person name="Palazzolo M."/>
            <person name="Pittman G.S."/>
            <person name="Pan S."/>
            <person name="Pollard J."/>
            <person name="Puri V."/>
            <person name="Reese M.G."/>
            <person name="Reinert K."/>
            <person name="Remington K."/>
            <person name="Saunders R.D.C."/>
            <person name="Scheeler F."/>
            <person name="Shen H."/>
            <person name="Shue B.C."/>
            <person name="Siden-Kiamos I."/>
            <person name="Simpson M."/>
            <person name="Skupski M.P."/>
            <person name="Smith T.J."/>
            <person name="Spier E."/>
            <person name="Spradling A.C."/>
            <person name="Stapleton M."/>
            <person name="Strong R."/>
            <person name="Sun E."/>
            <person name="Svirskas R."/>
            <person name="Tector C."/>
            <person name="Turner R."/>
            <person name="Venter E."/>
            <person name="Wang A.H."/>
            <person name="Wang X."/>
            <person name="Wang Z.-Y."/>
            <person name="Wassarman D.A."/>
            <person name="Weinstock G.M."/>
            <person name="Weissenbach J."/>
            <person name="Williams S.M."/>
            <person name="Woodage T."/>
            <person name="Worley K.C."/>
            <person name="Wu D."/>
            <person name="Yang S."/>
            <person name="Yao Q.A."/>
            <person name="Ye J."/>
            <person name="Yeh R.-F."/>
            <person name="Zaveri J.S."/>
            <person name="Zhan M."/>
            <person name="Zhang G."/>
            <person name="Zhao Q."/>
            <person name="Zheng L."/>
            <person name="Zheng X.H."/>
            <person name="Zhong F.N."/>
            <person name="Zhong W."/>
            <person name="Zhou X."/>
            <person name="Zhu S.C."/>
            <person name="Zhu X."/>
            <person name="Smith H.O."/>
            <person name="Gibbs R.A."/>
            <person name="Myers E.W."/>
            <person name="Rubin G.M."/>
            <person name="Venter J.C."/>
        </authorList>
    </citation>
    <scope>NUCLEOTIDE SEQUENCE [LARGE SCALE GENOMIC DNA]</scope>
    <source>
        <strain>Berkeley</strain>
    </source>
</reference>
<reference key="2">
    <citation type="journal article" date="2002" name="Genome Biol.">
        <title>Annotation of the Drosophila melanogaster euchromatic genome: a systematic review.</title>
        <authorList>
            <person name="Misra S."/>
            <person name="Crosby M.A."/>
            <person name="Mungall C.J."/>
            <person name="Matthews B.B."/>
            <person name="Campbell K.S."/>
            <person name="Hradecky P."/>
            <person name="Huang Y."/>
            <person name="Kaminker J.S."/>
            <person name="Millburn G.H."/>
            <person name="Prochnik S.E."/>
            <person name="Smith C.D."/>
            <person name="Tupy J.L."/>
            <person name="Whitfield E.J."/>
            <person name="Bayraktaroglu L."/>
            <person name="Berman B.P."/>
            <person name="Bettencourt B.R."/>
            <person name="Celniker S.E."/>
            <person name="de Grey A.D.N.J."/>
            <person name="Drysdale R.A."/>
            <person name="Harris N.L."/>
            <person name="Richter J."/>
            <person name="Russo S."/>
            <person name="Schroeder A.J."/>
            <person name="Shu S.Q."/>
            <person name="Stapleton M."/>
            <person name="Yamada C."/>
            <person name="Ashburner M."/>
            <person name="Gelbart W.M."/>
            <person name="Rubin G.M."/>
            <person name="Lewis S.E."/>
        </authorList>
    </citation>
    <scope>GENOME REANNOTATION</scope>
    <source>
        <strain>Berkeley</strain>
    </source>
</reference>
<reference key="3">
    <citation type="submission" date="2005-03" db="EMBL/GenBank/DDBJ databases">
        <authorList>
            <person name="Stapleton M."/>
            <person name="Carlson J.W."/>
            <person name="Chavez C."/>
            <person name="Frise E."/>
            <person name="George R.A."/>
            <person name="Pacleb J.M."/>
            <person name="Park S."/>
            <person name="Wan K.H."/>
            <person name="Yu C."/>
            <person name="Rubin G.M."/>
            <person name="Celniker S.E."/>
        </authorList>
    </citation>
    <scope>NUCLEOTIDE SEQUENCE [LARGE SCALE MRNA]</scope>
    <source>
        <strain>Berkeley</strain>
        <tissue>Head</tissue>
    </source>
</reference>
<reference key="4">
    <citation type="journal article" date="2010" name="J. Biol. Chem.">
        <title>Two pathways for importing GDP-fucose into the endoplasmic reticulum lumen function redundantly in the O-fucosylation of Notch in Drosophila.</title>
        <authorList>
            <person name="Ishikawa H.O."/>
            <person name="Ayukawa T."/>
            <person name="Nakayama M."/>
            <person name="Higashi S."/>
            <person name="Kamiyama S."/>
            <person name="Nishihara S."/>
            <person name="Aoki K."/>
            <person name="Ishida N."/>
            <person name="Sanai Y."/>
            <person name="Matsuno K."/>
        </authorList>
    </citation>
    <scope>FUNCTION</scope>
    <scope>SUBCELLULAR LOCATION</scope>
    <scope>DEVELOPMENTAL STAGE</scope>
    <scope>DISRUPTION PHENOTYPE</scope>
    <scope>MOTIF</scope>
</reference>
<comment type="function">
    <text evidence="2">Sugar transporter that specifically mediates the transport of UDP-N-acetylglucosamine (UDP-GlcNAc), GDP-fucose and UDP-xylose. Functions redundantly with Gfr in the O-fucosylation of Notch, positively regulating Notch signaling. Involved in the biosynthesis of heparan sulfate-glycosaminoglycan (HS-GAG) and in Dpp signaling in the wing imaginal disk.</text>
</comment>
<comment type="subcellular location">
    <subcellularLocation>
        <location evidence="2">Endoplasmic reticulum membrane</location>
        <topology evidence="2">Multi-pass membrane protein</topology>
    </subcellularLocation>
</comment>
<comment type="developmental stage">
    <text evidence="2">Expressed maternally and zygotically.</text>
</comment>
<comment type="disruption phenotype">
    <text evidence="2">Homozygous lethal. In a weak loss-of-function phenotype, a gap in the fifth longitudinal vein of the adult wing is observed.</text>
</comment>
<comment type="similarity">
    <text evidence="3">Belongs to the nucleotide-sugar transporter family. SLC35B subfamily.</text>
</comment>
<proteinExistence type="evidence at transcript level"/>
<evidence type="ECO:0000255" key="1"/>
<evidence type="ECO:0000269" key="2">
    <source>
    </source>
</evidence>
<evidence type="ECO:0000305" key="3"/>
<evidence type="ECO:0000312" key="4">
    <source>
        <dbReference type="FlyBase" id="FBgn0029849"/>
    </source>
</evidence>
<evidence type="ECO:0000312" key="5">
    <source>
        <dbReference type="Proteomes" id="UP000000803"/>
    </source>
</evidence>
<sequence length="352" mass="39494">MALNLKALLGMLFVFIGCCSNVVFLELIIQIDPGAGNLITFAQFLFIALEGLVFTSKFFTVRPKIALKDYVILVALFFGANVCNNYAFNFNIPMPLHMIFRSGSLMANMIMGIVLLKKRYNLRQYSSVAMITAGIILCTLVSSGDVKDNTHHSLKVDTSYSDFFWWTVGIGLLTIALLVTAYMGIYQEVIYKKYGKHPSEALFFTHMLPLPGFLIMAGNIVQHFGIAWSSEPVAVPLLGAIGLEWKFPLMLFYLLCNVVTQYVCISAVYVLTTECASLTVTLVVTLRKFVSLLFSIIYFRNPFTLNHWVGTILVFFGTILFANVINQVRDAYRARSSRKTHFDTAPLAKKVE</sequence>
<gene>
    <name evidence="4" type="primary">Efr</name>
    <name evidence="4" type="ORF">CG3774</name>
</gene>
<dbReference type="EMBL" id="AE014298">
    <property type="protein sequence ID" value="AAF46131.1"/>
    <property type="molecule type" value="Genomic_DNA"/>
</dbReference>
<dbReference type="EMBL" id="BT021217">
    <property type="protein sequence ID" value="AAX33365.1"/>
    <property type="molecule type" value="mRNA"/>
</dbReference>
<dbReference type="RefSeq" id="NP_572299.1">
    <property type="nucleotide sequence ID" value="NM_132071.3"/>
</dbReference>
<dbReference type="RefSeq" id="NP_727071.1">
    <property type="nucleotide sequence ID" value="NM_167062.3"/>
</dbReference>
<dbReference type="FunCoup" id="Q9W429">
    <property type="interactions" value="1413"/>
</dbReference>
<dbReference type="IntAct" id="Q9W429">
    <property type="interactions" value="1"/>
</dbReference>
<dbReference type="STRING" id="7227.FBpp0070839"/>
<dbReference type="PaxDb" id="7227-FBpp0070839"/>
<dbReference type="EnsemblMetazoa" id="FBtr0070874">
    <property type="protein sequence ID" value="FBpp0070839"/>
    <property type="gene ID" value="FBgn0029849"/>
</dbReference>
<dbReference type="EnsemblMetazoa" id="FBtr0070875">
    <property type="protein sequence ID" value="FBpp0070840"/>
    <property type="gene ID" value="FBgn0029849"/>
</dbReference>
<dbReference type="GeneID" id="31553"/>
<dbReference type="KEGG" id="dme:Dmel_CG3774"/>
<dbReference type="UCSC" id="CG3774-RA">
    <property type="organism name" value="d. melanogaster"/>
</dbReference>
<dbReference type="AGR" id="FB:FBgn0029849"/>
<dbReference type="CTD" id="31553"/>
<dbReference type="FlyBase" id="FBgn0029849">
    <property type="gene designation" value="Efr"/>
</dbReference>
<dbReference type="VEuPathDB" id="VectorBase:FBgn0029849"/>
<dbReference type="eggNOG" id="KOG1583">
    <property type="taxonomic scope" value="Eukaryota"/>
</dbReference>
<dbReference type="GeneTree" id="ENSGT00390000002915"/>
<dbReference type="HOGENOM" id="CLU_033007_1_0_1"/>
<dbReference type="InParanoid" id="Q9W429"/>
<dbReference type="OMA" id="NPFTGWH"/>
<dbReference type="OrthoDB" id="999962at2759"/>
<dbReference type="PhylomeDB" id="Q9W429"/>
<dbReference type="Reactome" id="R-DME-727802">
    <property type="pathway name" value="Transport of nucleotide sugars"/>
</dbReference>
<dbReference type="BioGRID-ORCS" id="31553">
    <property type="hits" value="0 hits in 1 CRISPR screen"/>
</dbReference>
<dbReference type="GenomeRNAi" id="31553"/>
<dbReference type="PRO" id="PR:Q9W429"/>
<dbReference type="Proteomes" id="UP000000803">
    <property type="component" value="Chromosome X"/>
</dbReference>
<dbReference type="Bgee" id="FBgn0029849">
    <property type="expression patterns" value="Expressed in oviduct (Drosophila) and 130 other cell types or tissues"/>
</dbReference>
<dbReference type="ExpressionAtlas" id="Q9W429">
    <property type="expression patterns" value="baseline and differential"/>
</dbReference>
<dbReference type="GO" id="GO:0005789">
    <property type="term" value="C:endoplasmic reticulum membrane"/>
    <property type="evidence" value="ECO:0000314"/>
    <property type="project" value="FlyBase"/>
</dbReference>
<dbReference type="GO" id="GO:0000139">
    <property type="term" value="C:Golgi membrane"/>
    <property type="evidence" value="ECO:0000318"/>
    <property type="project" value="GO_Central"/>
</dbReference>
<dbReference type="GO" id="GO:0005457">
    <property type="term" value="F:GDP-fucose transmembrane transporter activity"/>
    <property type="evidence" value="ECO:0000314"/>
    <property type="project" value="FlyBase"/>
</dbReference>
<dbReference type="GO" id="GO:0005462">
    <property type="term" value="F:UDP-N-acetylglucosamine transmembrane transporter activity"/>
    <property type="evidence" value="ECO:0000314"/>
    <property type="project" value="FlyBase"/>
</dbReference>
<dbReference type="GO" id="GO:0005464">
    <property type="term" value="F:UDP-xylose transmembrane transporter activity"/>
    <property type="evidence" value="ECO:0000314"/>
    <property type="project" value="FlyBase"/>
</dbReference>
<dbReference type="GO" id="GO:0036084">
    <property type="term" value="P:GDP-fucose import into endoplasmic reticulum lumen"/>
    <property type="evidence" value="ECO:0000305"/>
    <property type="project" value="FlyBase"/>
</dbReference>
<dbReference type="GO" id="GO:0015783">
    <property type="term" value="P:GDP-fucose transmembrane transport"/>
    <property type="evidence" value="ECO:0000314"/>
    <property type="project" value="FlyBase"/>
</dbReference>
<dbReference type="GO" id="GO:1990569">
    <property type="term" value="P:UDP-N-acetylglucosamine transmembrane transport"/>
    <property type="evidence" value="ECO:0000314"/>
    <property type="project" value="FlyBase"/>
</dbReference>
<dbReference type="GO" id="GO:0015790">
    <property type="term" value="P:UDP-xylose transmembrane transport"/>
    <property type="evidence" value="ECO:0000314"/>
    <property type="project" value="FlyBase"/>
</dbReference>
<dbReference type="InterPro" id="IPR013657">
    <property type="entry name" value="SCL35B1-4/HUT1"/>
</dbReference>
<dbReference type="PANTHER" id="PTHR10778:SF4">
    <property type="entry name" value="NUCLEOTIDE SUGAR TRANSPORTER SLC35B4"/>
    <property type="match status" value="1"/>
</dbReference>
<dbReference type="PANTHER" id="PTHR10778">
    <property type="entry name" value="SOLUTE CARRIER FAMILY 35 MEMBER B"/>
    <property type="match status" value="1"/>
</dbReference>
<dbReference type="Pfam" id="PF08449">
    <property type="entry name" value="UAA"/>
    <property type="match status" value="1"/>
</dbReference>
<dbReference type="SUPFAM" id="SSF103481">
    <property type="entry name" value="Multidrug resistance efflux transporter EmrE"/>
    <property type="match status" value="1"/>
</dbReference>
<name>S35B4_DROME</name>